<keyword id="KW-0044">Antibiotic</keyword>
<keyword id="KW-0929">Antimicrobial</keyword>
<keyword id="KW-0211">Defensin</keyword>
<keyword id="KW-0903">Direct protein sequencing</keyword>
<keyword id="KW-1015">Disulfide bond</keyword>
<keyword id="KW-0964">Secreted</keyword>
<organism>
    <name type="scientific">Petromyzon marinus</name>
    <name type="common">Sea lamprey</name>
    <dbReference type="NCBI Taxonomy" id="7757"/>
    <lineage>
        <taxon>Eukaryota</taxon>
        <taxon>Metazoa</taxon>
        <taxon>Chordata</taxon>
        <taxon>Craniata</taxon>
        <taxon>Vertebrata</taxon>
        <taxon>Cyclostomata</taxon>
        <taxon>Hyperoartia</taxon>
        <taxon>Petromyzontiformes</taxon>
        <taxon>Petromyzontidae</taxon>
        <taxon>Petromyzon</taxon>
    </lineage>
</organism>
<accession>Q10996</accession>
<sequence length="19" mass="2209">CPCGRRRCCVRGLNVYCCF</sequence>
<reference key="1">
    <citation type="journal article" date="1996" name="Comp. Biochem. Physiol.">
        <title>Isolation of a peptide structurally related to mammalian corticostatins from the lamprey Petromyzon marinus.</title>
        <authorList>
            <person name="Conlon J.M."/>
            <person name="Sower S.A."/>
        </authorList>
    </citation>
    <scope>PROTEIN SEQUENCE</scope>
    <scope>MASS SPECTROMETRY</scope>
    <source>
        <tissue>Skin</tissue>
    </source>
</reference>
<proteinExistence type="evidence at protein level"/>
<protein>
    <recommendedName>
        <fullName>Corticostatin-related peptide LCRP</fullName>
    </recommendedName>
</protein>
<feature type="peptide" id="PRO_0000043635" description="Corticostatin-related peptide LCRP">
    <location>
        <begin position="1"/>
        <end position="19"/>
    </location>
</feature>
<feature type="disulfide bond" evidence="1">
    <location>
        <begin position="1"/>
        <end position="18"/>
    </location>
</feature>
<feature type="disulfide bond" evidence="1">
    <location>
        <begin position="3"/>
        <end position="9"/>
    </location>
</feature>
<feature type="disulfide bond" evidence="1">
    <location>
        <begin position="8"/>
        <end position="17"/>
    </location>
</feature>
<dbReference type="Ensembl" id="ENSPMAT00000011096.1">
    <property type="protein sequence ID" value="ENSPMAP00000011050.1"/>
    <property type="gene ID" value="ENSPMAG00000010069.1"/>
</dbReference>
<dbReference type="HOGENOM" id="CLU_3430684_0_0_1"/>
<dbReference type="Proteomes" id="UP001318040">
    <property type="component" value="Unplaced"/>
</dbReference>
<dbReference type="GO" id="GO:0005576">
    <property type="term" value="C:extracellular region"/>
    <property type="evidence" value="ECO:0007669"/>
    <property type="project" value="UniProtKB-SubCell"/>
</dbReference>
<dbReference type="GO" id="GO:0042742">
    <property type="term" value="P:defense response to bacterium"/>
    <property type="evidence" value="ECO:0007669"/>
    <property type="project" value="UniProtKB-KW"/>
</dbReference>
<comment type="function">
    <text>May have microbicidal activities. May inhibit corticotropin (ACTH) stimulated steroidogenesis and the microbial actions of the corticostatins.</text>
</comment>
<comment type="subcellular location">
    <subcellularLocation>
        <location>Secreted</location>
    </subcellularLocation>
</comment>
<comment type="mass spectrometry" mass="2201.0" error="0.4" method="Electrospray" evidence="2"/>
<comment type="similarity">
    <text evidence="3">Belongs to the alpha-defensin family.</text>
</comment>
<evidence type="ECO:0000250" key="1"/>
<evidence type="ECO:0000269" key="2">
    <source>
    </source>
</evidence>
<evidence type="ECO:0000305" key="3"/>
<name>LCRP_PETMA</name>